<proteinExistence type="evidence at transcript level"/>
<organism>
    <name type="scientific">Pongo abelii</name>
    <name type="common">Sumatran orangutan</name>
    <name type="synonym">Pongo pygmaeus abelii</name>
    <dbReference type="NCBI Taxonomy" id="9601"/>
    <lineage>
        <taxon>Eukaryota</taxon>
        <taxon>Metazoa</taxon>
        <taxon>Chordata</taxon>
        <taxon>Craniata</taxon>
        <taxon>Vertebrata</taxon>
        <taxon>Euteleostomi</taxon>
        <taxon>Mammalia</taxon>
        <taxon>Eutheria</taxon>
        <taxon>Euarchontoglires</taxon>
        <taxon>Primates</taxon>
        <taxon>Haplorrhini</taxon>
        <taxon>Catarrhini</taxon>
        <taxon>Hominidae</taxon>
        <taxon>Pongo</taxon>
    </lineage>
</organism>
<evidence type="ECO:0000250" key="1"/>
<evidence type="ECO:0000305" key="2"/>
<feature type="chain" id="PRO_0000245583" description="Phenazine biosynthesis-like domain-containing protein">
    <location>
        <begin position="1"/>
        <end position="288"/>
    </location>
</feature>
<feature type="active site" evidence="1">
    <location>
        <position position="46"/>
    </location>
</feature>
<accession>Q5RDZ1</accession>
<reference key="1">
    <citation type="submission" date="2004-11" db="EMBL/GenBank/DDBJ databases">
        <authorList>
            <consortium name="The German cDNA consortium"/>
        </authorList>
    </citation>
    <scope>NUCLEOTIDE SEQUENCE [LARGE SCALE MRNA]</scope>
    <source>
        <tissue>Kidney</tissue>
    </source>
</reference>
<comment type="subunit">
    <text evidence="1">Interacts with UNRIP/MAWD.</text>
</comment>
<comment type="similarity">
    <text evidence="2">Belongs to the PhzF family.</text>
</comment>
<dbReference type="EC" id="5.1.-.-"/>
<dbReference type="EMBL" id="CR857750">
    <property type="protein sequence ID" value="CAH90016.1"/>
    <property type="molecule type" value="mRNA"/>
</dbReference>
<dbReference type="RefSeq" id="NP_001124957.1">
    <property type="nucleotide sequence ID" value="NM_001131485.1"/>
</dbReference>
<dbReference type="SMR" id="Q5RDZ1"/>
<dbReference type="FunCoup" id="Q5RDZ1">
    <property type="interactions" value="232"/>
</dbReference>
<dbReference type="STRING" id="9601.ENSPPYP00000002784"/>
<dbReference type="GeneID" id="100171830"/>
<dbReference type="KEGG" id="pon:100171830"/>
<dbReference type="CTD" id="64081"/>
<dbReference type="eggNOG" id="KOG3033">
    <property type="taxonomic scope" value="Eukaryota"/>
</dbReference>
<dbReference type="InParanoid" id="Q5RDZ1"/>
<dbReference type="OrthoDB" id="75169at2759"/>
<dbReference type="Proteomes" id="UP000001595">
    <property type="component" value="Unplaced"/>
</dbReference>
<dbReference type="GO" id="GO:0005737">
    <property type="term" value="C:cytoplasm"/>
    <property type="evidence" value="ECO:0007669"/>
    <property type="project" value="TreeGrafter"/>
</dbReference>
<dbReference type="GO" id="GO:0016853">
    <property type="term" value="F:isomerase activity"/>
    <property type="evidence" value="ECO:0007669"/>
    <property type="project" value="UniProtKB-KW"/>
</dbReference>
<dbReference type="GO" id="GO:0009058">
    <property type="term" value="P:biosynthetic process"/>
    <property type="evidence" value="ECO:0007669"/>
    <property type="project" value="InterPro"/>
</dbReference>
<dbReference type="FunFam" id="3.10.310.10:FF:000013">
    <property type="entry name" value="Phenazine biosynthesis-like domain-containing protein 1"/>
    <property type="match status" value="1"/>
</dbReference>
<dbReference type="FunFam" id="3.10.310.10:FF:000020">
    <property type="entry name" value="Phenazine biosynthesis-like domain-containing protein 1"/>
    <property type="match status" value="1"/>
</dbReference>
<dbReference type="Gene3D" id="3.10.310.10">
    <property type="entry name" value="Diaminopimelate Epimerase, Chain A, domain 1"/>
    <property type="match status" value="2"/>
</dbReference>
<dbReference type="InterPro" id="IPR003719">
    <property type="entry name" value="Phenazine_PhzF-like"/>
</dbReference>
<dbReference type="NCBIfam" id="TIGR00654">
    <property type="entry name" value="PhzF_family"/>
    <property type="match status" value="1"/>
</dbReference>
<dbReference type="PANTHER" id="PTHR13774">
    <property type="entry name" value="PHENAZINE BIOSYNTHESIS PROTEIN"/>
    <property type="match status" value="1"/>
</dbReference>
<dbReference type="PANTHER" id="PTHR13774:SF17">
    <property type="entry name" value="PHENAZINE BIOSYNTHESIS-LIKE DOMAIN-CONTAINING PROTEIN"/>
    <property type="match status" value="1"/>
</dbReference>
<dbReference type="Pfam" id="PF02567">
    <property type="entry name" value="PhzC-PhzF"/>
    <property type="match status" value="1"/>
</dbReference>
<dbReference type="PIRSF" id="PIRSF016184">
    <property type="entry name" value="PhzC_PhzF"/>
    <property type="match status" value="1"/>
</dbReference>
<dbReference type="SUPFAM" id="SSF54506">
    <property type="entry name" value="Diaminopimelate epimerase-like"/>
    <property type="match status" value="1"/>
</dbReference>
<name>PBLD_PONAB</name>
<keyword id="KW-0413">Isomerase</keyword>
<keyword id="KW-1185">Reference proteome</keyword>
<sequence length="288" mass="31931">MKLPIFIADAFTARAFRGDPAAVCLLENELDEDMHQKIAREMNLSETAFIRKLHPTDNFAQSSCFGLRWFTPASEVPLCGHATLASAAVLFHKIKNMTSMLTFVTLSGELRARRAEDGIILDFPLYPAHPQDFHEVEDLIKTAIGNTLVQDICYSPDTRKLLIRLSDVYDRSFLENLKVNTENLLQVENTGKVKGLILTLKGEPGGQTQAFDFYSRYFAPWVAVAEDPVTGSAHAVLSSYWSQHLGKKEMHAFQCSRRGGELGISLRPDGRVDITGSAAVVLEGTLTV</sequence>
<gene>
    <name type="primary">PBLD</name>
    <name type="synonym">MAWBP</name>
</gene>
<protein>
    <recommendedName>
        <fullName>Phenazine biosynthesis-like domain-containing protein</fullName>
        <ecNumber>5.1.-.-</ecNumber>
    </recommendedName>
</protein>